<dbReference type="EMBL" id="BX248583">
    <property type="protein sequence ID" value="CAD83481.1"/>
    <property type="molecule type" value="Genomic_DNA"/>
</dbReference>
<dbReference type="SMR" id="Q7VR10"/>
<dbReference type="STRING" id="203907.Bfl419"/>
<dbReference type="KEGG" id="bfl:Bfl419"/>
<dbReference type="eggNOG" id="COG3785">
    <property type="taxonomic scope" value="Bacteria"/>
</dbReference>
<dbReference type="HOGENOM" id="CLU_123865_1_0_6"/>
<dbReference type="OrthoDB" id="9806050at2"/>
<dbReference type="Proteomes" id="UP000002192">
    <property type="component" value="Chromosome"/>
</dbReference>
<dbReference type="GO" id="GO:0005737">
    <property type="term" value="C:cytoplasm"/>
    <property type="evidence" value="ECO:0007669"/>
    <property type="project" value="UniProtKB-SubCell"/>
</dbReference>
<dbReference type="GO" id="GO:0003677">
    <property type="term" value="F:DNA binding"/>
    <property type="evidence" value="ECO:0007669"/>
    <property type="project" value="InterPro"/>
</dbReference>
<dbReference type="GO" id="GO:0009408">
    <property type="term" value="P:response to heat"/>
    <property type="evidence" value="ECO:0007669"/>
    <property type="project" value="UniProtKB-UniRule"/>
</dbReference>
<dbReference type="Gene3D" id="2.30.30.390">
    <property type="entry name" value="Hemimethylated DNA-binding domain"/>
    <property type="match status" value="1"/>
</dbReference>
<dbReference type="HAMAP" id="MF_01194">
    <property type="entry name" value="HspQ"/>
    <property type="match status" value="1"/>
</dbReference>
<dbReference type="InterPro" id="IPR011722">
    <property type="entry name" value="Hemimethylated_DNA-bd_dom"/>
</dbReference>
<dbReference type="InterPro" id="IPR036623">
    <property type="entry name" value="Hemimethylated_DNA-bd_sf"/>
</dbReference>
<dbReference type="InterPro" id="IPR022866">
    <property type="entry name" value="HspQ"/>
</dbReference>
<dbReference type="NCBIfam" id="NF010729">
    <property type="entry name" value="PRK14129.1"/>
    <property type="match status" value="1"/>
</dbReference>
<dbReference type="NCBIfam" id="TIGR02097">
    <property type="entry name" value="yccV"/>
    <property type="match status" value="1"/>
</dbReference>
<dbReference type="Pfam" id="PF08755">
    <property type="entry name" value="YccV-like"/>
    <property type="match status" value="1"/>
</dbReference>
<dbReference type="SMART" id="SM00992">
    <property type="entry name" value="YccV-like"/>
    <property type="match status" value="1"/>
</dbReference>
<dbReference type="SUPFAM" id="SSF141255">
    <property type="entry name" value="YccV-like"/>
    <property type="match status" value="1"/>
</dbReference>
<proteinExistence type="inferred from homology"/>
<comment type="function">
    <text evidence="1">Involved in the degradation of certain denaturated proteins, including DnaA, during heat shock stress.</text>
</comment>
<comment type="subcellular location">
    <subcellularLocation>
        <location evidence="1">Cytoplasm</location>
    </subcellularLocation>
</comment>
<comment type="similarity">
    <text evidence="1">Belongs to the HspQ family.</text>
</comment>
<organism>
    <name type="scientific">Blochmanniella floridana</name>
    <dbReference type="NCBI Taxonomy" id="203907"/>
    <lineage>
        <taxon>Bacteria</taxon>
        <taxon>Pseudomonadati</taxon>
        <taxon>Pseudomonadota</taxon>
        <taxon>Gammaproteobacteria</taxon>
        <taxon>Enterobacterales</taxon>
        <taxon>Enterobacteriaceae</taxon>
        <taxon>ant endosymbionts</taxon>
        <taxon>Candidatus Blochmanniella</taxon>
    </lineage>
</organism>
<feature type="chain" id="PRO_0000315299" description="Heat shock protein HspQ">
    <location>
        <begin position="1"/>
        <end position="105"/>
    </location>
</feature>
<accession>Q7VR10</accession>
<name>HSPQ_BLOFL</name>
<gene>
    <name evidence="1" type="primary">hspQ</name>
    <name type="ordered locus">Bfl419</name>
</gene>
<sequence length="105" mass="12192">MIASKFKIGQQVRHKLLGYLGVVIDIDPEYSLEKPTLDEVTKNDSLRKFPWYHVVMEDDEGKPIHTYLAEIQLGYEDTVIHPEQSTLDDLAESIRLQLQTPRLRN</sequence>
<keyword id="KW-0963">Cytoplasm</keyword>
<keyword id="KW-1185">Reference proteome</keyword>
<keyword id="KW-0346">Stress response</keyword>
<reference key="1">
    <citation type="journal article" date="2003" name="Proc. Natl. Acad. Sci. U.S.A.">
        <title>The genome sequence of Blochmannia floridanus: comparative analysis of reduced genomes.</title>
        <authorList>
            <person name="Gil R."/>
            <person name="Silva F.J."/>
            <person name="Zientz E."/>
            <person name="Delmotte F."/>
            <person name="Gonzalez-Candelas F."/>
            <person name="Latorre A."/>
            <person name="Rausell C."/>
            <person name="Kamerbeek J."/>
            <person name="Gadau J."/>
            <person name="Hoelldobler B."/>
            <person name="van Ham R.C.H.J."/>
            <person name="Gross R."/>
            <person name="Moya A."/>
        </authorList>
    </citation>
    <scope>NUCLEOTIDE SEQUENCE [LARGE SCALE GENOMIC DNA]</scope>
</reference>
<protein>
    <recommendedName>
        <fullName evidence="1">Heat shock protein HspQ</fullName>
    </recommendedName>
</protein>
<evidence type="ECO:0000255" key="1">
    <source>
        <dbReference type="HAMAP-Rule" id="MF_01194"/>
    </source>
</evidence>